<reference key="1">
    <citation type="journal article" date="1985" name="Proc. Natl. Acad. Sci. U.S.A.">
        <title>Cloning and sequence analysis of cDNA for the luminescent protein aequorin.</title>
        <authorList>
            <person name="Inouye S."/>
            <person name="Noguchi M."/>
            <person name="Sakaki Y."/>
            <person name="Takagi Y."/>
            <person name="Miyata T."/>
            <person name="Iwanaga S."/>
            <person name="Miyata T."/>
            <person name="Tsuji F.I."/>
        </authorList>
    </citation>
    <scope>NUCLEOTIDE SEQUENCE [MRNA]</scope>
</reference>
<reference key="2">
    <citation type="journal article" date="1987" name="Biochemistry">
        <title>Sequence comparisons of complementary DNAs encoding aequorin isotypes.</title>
        <authorList>
            <person name="Prasher D.C."/>
            <person name="McCann R.O."/>
            <person name="Longiaru M."/>
            <person name="Cormier M.J."/>
        </authorList>
    </citation>
    <scope>NUCLEOTIDE SEQUENCE [MRNA] OF 9-185 (AEQUORIN 2 AND 3)</scope>
</reference>
<reference key="3">
    <citation type="journal article" date="1985" name="Biochemistry">
        <title>Amino acid sequence of the calcium-dependent photoprotein aequorin.</title>
        <authorList>
            <person name="Charbonneau H."/>
            <person name="Walsh K.A."/>
            <person name="McCann R.O."/>
            <person name="Prendergast F.G."/>
            <person name="Cormier M.J."/>
            <person name="Vanaman T.C."/>
        </authorList>
    </citation>
    <scope>PROTEIN SEQUENCE OF 8-196</scope>
</reference>
<reference key="4">
    <citation type="journal article" date="1986" name="Proc. Natl. Acad. Sci. U.S.A.">
        <title>Site-specific mutagenesis of the calcium-binding photoprotein aequorin.</title>
        <authorList>
            <person name="Tsuji F.I."/>
            <person name="Inouye S."/>
            <person name="Goto T."/>
            <person name="Sakaki Y."/>
        </authorList>
    </citation>
    <scope>MUTAGENESIS</scope>
</reference>
<reference key="5">
    <citation type="journal article" date="1991" name="FEBS Lett.">
        <title>A C-terminal proline is required for bioluminescence of the Ca(2+)-binding photoprotein, aequorin.</title>
        <authorList>
            <person name="Nomura M."/>
            <person name="Inouye S."/>
            <person name="Ohmiya Y."/>
            <person name="Tsuji F.I."/>
        </authorList>
    </citation>
    <scope>MUTAGENESIS OF PRO-196</scope>
</reference>
<reference key="6">
    <citation type="journal article" date="1993" name="FEBS Lett.">
        <title>Mass spectrometric evidence for a disulfide bond in aequorin regeneration.</title>
        <authorList>
            <person name="Ohmiya Y."/>
            <person name="Kurono S."/>
            <person name="Ohashi M."/>
            <person name="Fagan T.F."/>
            <person name="Tsuji F.I."/>
        </authorList>
    </citation>
    <scope>PRELIMINARY DISULFIDE BOND</scope>
</reference>
<reference key="7">
    <citation type="journal article" date="2000" name="Nature">
        <title>The crystal structure of the photoprotein aequorin at 2.3-A resolution.</title>
        <authorList>
            <person name="Head J.F."/>
            <person name="Inouye S."/>
            <person name="Teranishi K."/>
            <person name="Shimomura O."/>
        </authorList>
    </citation>
    <scope>X-RAY CRYSTALLOGRAPHY (2.3 ANGSTROMS)</scope>
</reference>
<sequence length="196" mass="22285">MTSKQYSVKLTSDFDNPRWIGRHKHMFNFLDVNHNGKISLDEMVYKASDIVINNLGATPEQAKRHKDAVEAFFGGAGMKYGVETDWPAYIEGWKKLATDELEKYAKNEPTLIRIWGDALFDIVDKDQNGAITLDEWKAYTKAAGIIQSSEDCEETFRVCDIDESGQLDVDEMTRQHLGFWYTMDPACEKLYGGAVP</sequence>
<proteinExistence type="evidence at protein level"/>
<comment type="function">
    <text>Ca(2+)-dependent bioluminescence photoprotein. Displays an emission peak at 470 nm (blue light). Trace amounts of calcium ion trigger the intramolecular oxidation of the chromophore, coelenterazine into coelenteramide and CO(2) with the concomitant emission of light.</text>
</comment>
<comment type="PTM">
    <text>The reduction of the disulfide bond is necessary to regenerate aequorin from apoaequorin.</text>
</comment>
<comment type="similarity">
    <text evidence="5">Belongs to the aequorin family.</text>
</comment>
<comment type="caution">
    <text evidence="7">Was originally thought to have an internal disulfide bond.</text>
</comment>
<protein>
    <recommendedName>
        <fullName>Aequorin-2</fullName>
    </recommendedName>
</protein>
<name>AEQ2_AEQVI</name>
<feature type="propeptide" id="PRO_0000004128" evidence="4">
    <location>
        <begin position="1"/>
        <end position="7"/>
    </location>
</feature>
<feature type="chain" id="PRO_0000004129" description="Aequorin-2">
    <location>
        <begin position="8"/>
        <end position="196"/>
    </location>
</feature>
<feature type="domain" description="EF-hand 1" evidence="1">
    <location>
        <begin position="18"/>
        <end position="53"/>
    </location>
</feature>
<feature type="domain" description="EF-hand 2" evidence="6">
    <location>
        <begin position="54"/>
        <end position="108"/>
    </location>
</feature>
<feature type="domain" description="EF-hand 3" evidence="1">
    <location>
        <begin position="117"/>
        <end position="146"/>
    </location>
</feature>
<feature type="domain" description="EF-hand 4" evidence="1">
    <location>
        <begin position="147"/>
        <end position="182"/>
    </location>
</feature>
<feature type="region of interest" description="May interact with the chromophore">
    <location>
        <begin position="47"/>
        <end position="57"/>
    </location>
</feature>
<feature type="region of interest" description="May interact with the chromophore">
    <location>
        <begin position="62"/>
        <end position="72"/>
    </location>
</feature>
<feature type="region of interest" description="May interact with the chromophore">
    <location>
        <begin position="107"/>
        <end position="117"/>
    </location>
</feature>
<feature type="binding site" evidence="1">
    <location>
        <position position="31"/>
    </location>
    <ligand>
        <name>Ca(2+)</name>
        <dbReference type="ChEBI" id="CHEBI:29108"/>
        <label>1</label>
    </ligand>
</feature>
<feature type="binding site" evidence="1">
    <location>
        <position position="33"/>
    </location>
    <ligand>
        <name>Ca(2+)</name>
        <dbReference type="ChEBI" id="CHEBI:29108"/>
        <label>1</label>
    </ligand>
</feature>
<feature type="binding site" evidence="1">
    <location>
        <position position="35"/>
    </location>
    <ligand>
        <name>Ca(2+)</name>
        <dbReference type="ChEBI" id="CHEBI:29108"/>
        <label>1</label>
    </ligand>
</feature>
<feature type="binding site" evidence="1">
    <location>
        <position position="37"/>
    </location>
    <ligand>
        <name>Ca(2+)</name>
        <dbReference type="ChEBI" id="CHEBI:29108"/>
        <label>1</label>
    </ligand>
</feature>
<feature type="binding site" evidence="1">
    <location>
        <position position="42"/>
    </location>
    <ligand>
        <name>Ca(2+)</name>
        <dbReference type="ChEBI" id="CHEBI:29108"/>
        <label>1</label>
    </ligand>
</feature>
<feature type="binding site" evidence="1">
    <location>
        <position position="124"/>
    </location>
    <ligand>
        <name>Ca(2+)</name>
        <dbReference type="ChEBI" id="CHEBI:29108"/>
        <label>2</label>
    </ligand>
</feature>
<feature type="binding site" evidence="1">
    <location>
        <position position="126"/>
    </location>
    <ligand>
        <name>Ca(2+)</name>
        <dbReference type="ChEBI" id="CHEBI:29108"/>
        <label>2</label>
    </ligand>
</feature>
<feature type="binding site" evidence="1">
    <location>
        <position position="128"/>
    </location>
    <ligand>
        <name>Ca(2+)</name>
        <dbReference type="ChEBI" id="CHEBI:29108"/>
        <label>2</label>
    </ligand>
</feature>
<feature type="binding site" evidence="1">
    <location>
        <position position="135"/>
    </location>
    <ligand>
        <name>Ca(2+)</name>
        <dbReference type="ChEBI" id="CHEBI:29108"/>
        <label>2</label>
    </ligand>
</feature>
<feature type="binding site" evidence="1">
    <location>
        <position position="160"/>
    </location>
    <ligand>
        <name>Ca(2+)</name>
        <dbReference type="ChEBI" id="CHEBI:29108"/>
        <label>3</label>
    </ligand>
</feature>
<feature type="binding site" evidence="1">
    <location>
        <position position="162"/>
    </location>
    <ligand>
        <name>Ca(2+)</name>
        <dbReference type="ChEBI" id="CHEBI:29108"/>
        <label>3</label>
    </ligand>
</feature>
<feature type="binding site" evidence="1">
    <location>
        <position position="164"/>
    </location>
    <ligand>
        <name>Ca(2+)</name>
        <dbReference type="ChEBI" id="CHEBI:29108"/>
        <label>3</label>
    </ligand>
</feature>
<feature type="binding site" evidence="1">
    <location>
        <position position="166"/>
    </location>
    <ligand>
        <name>Ca(2+)</name>
        <dbReference type="ChEBI" id="CHEBI:29108"/>
        <label>3</label>
    </ligand>
</feature>
<feature type="binding site" evidence="1">
    <location>
        <position position="171"/>
    </location>
    <ligand>
        <name>Ca(2+)</name>
        <dbReference type="ChEBI" id="CHEBI:29108"/>
        <label>3</label>
    </ligand>
</feature>
<feature type="site" description="Required for bioluminescence">
    <location>
        <position position="196"/>
    </location>
</feature>
<feature type="sequence variant" description="In aequorin-3.">
    <original>EA</original>
    <variation>GD</variation>
    <location>
        <begin position="70"/>
        <end position="71"/>
    </location>
</feature>
<feature type="sequence variant" description="In aequorin-3.">
    <original>S</original>
    <variation>N</variation>
    <location>
        <position position="164"/>
    </location>
</feature>
<feature type="mutagenesis site" description="100% activity loss." evidence="2">
    <original>G</original>
    <variation>R</variation>
    <location>
        <position position="36"/>
    </location>
</feature>
<feature type="mutagenesis site" description="100% activity loss." evidence="2">
    <original>H</original>
    <variation>F</variation>
    <location>
        <position position="65"/>
    </location>
</feature>
<feature type="mutagenesis site" description="51% activity loss." evidence="2">
    <original>G</original>
    <variation>R</variation>
    <location>
        <position position="129"/>
    </location>
</feature>
<feature type="mutagenesis site" description="52% activity loss." evidence="2">
    <original>C</original>
    <variation>R</variation>
    <location>
        <position position="152"/>
    </location>
</feature>
<feature type="mutagenesis site" description="33% activity loss." evidence="2">
    <original>C</original>
    <variation>S</variation>
    <location>
        <position position="152"/>
    </location>
</feature>
<feature type="mutagenesis site" description="41% activity loss." evidence="2">
    <original>C</original>
    <variation>S</variation>
    <location>
        <position position="159"/>
    </location>
</feature>
<feature type="mutagenesis site" description="No activity loss." evidence="2">
    <original>G</original>
    <variation>R</variation>
    <location>
        <position position="165"/>
    </location>
</feature>
<feature type="mutagenesis site" description="71% activity loss." evidence="2">
    <original>C</original>
    <variation>S</variation>
    <location>
        <position position="187"/>
    </location>
</feature>
<feature type="mutagenesis site" description="Loss of bioluminescence." evidence="3">
    <location>
        <position position="196"/>
    </location>
</feature>
<feature type="sequence conflict" description="In Ref. 2; AAA27717." evidence="5" ref="2">
    <original>K</original>
    <variation>R</variation>
    <location>
        <position position="37"/>
    </location>
</feature>
<feature type="helix" evidence="8">
    <location>
        <begin position="17"/>
        <end position="30"/>
    </location>
</feature>
<feature type="strand" evidence="8">
    <location>
        <begin position="36"/>
        <end position="39"/>
    </location>
</feature>
<feature type="helix" evidence="8">
    <location>
        <begin position="40"/>
        <end position="53"/>
    </location>
</feature>
<feature type="helix" evidence="8">
    <location>
        <begin position="59"/>
        <end position="75"/>
    </location>
</feature>
<feature type="strand" evidence="8">
    <location>
        <begin position="83"/>
        <end position="85"/>
    </location>
</feature>
<feature type="helix" evidence="8">
    <location>
        <begin position="86"/>
        <end position="105"/>
    </location>
</feature>
<feature type="helix" evidence="8">
    <location>
        <begin position="111"/>
        <end position="123"/>
    </location>
</feature>
<feature type="strand" evidence="8">
    <location>
        <begin position="128"/>
        <end position="131"/>
    </location>
</feature>
<feature type="helix" evidence="8">
    <location>
        <begin position="133"/>
        <end position="143"/>
    </location>
</feature>
<feature type="helix" evidence="8">
    <location>
        <begin position="149"/>
        <end position="158"/>
    </location>
</feature>
<feature type="helix" evidence="8">
    <location>
        <begin position="169"/>
        <end position="180"/>
    </location>
</feature>
<feature type="helix" evidence="8">
    <location>
        <begin position="185"/>
        <end position="187"/>
    </location>
</feature>
<feature type="turn" evidence="8">
    <location>
        <begin position="188"/>
        <end position="193"/>
    </location>
</feature>
<evidence type="ECO:0000255" key="1">
    <source>
        <dbReference type="PROSITE-ProRule" id="PRU00448"/>
    </source>
</evidence>
<evidence type="ECO:0000269" key="2">
    <source>
    </source>
</evidence>
<evidence type="ECO:0000269" key="3">
    <source>
    </source>
</evidence>
<evidence type="ECO:0000269" key="4">
    <source>
    </source>
</evidence>
<evidence type="ECO:0000305" key="5"/>
<evidence type="ECO:0000305" key="6">
    <source>
    </source>
</evidence>
<evidence type="ECO:0000305" key="7">
    <source>
    </source>
</evidence>
<evidence type="ECO:0007829" key="8">
    <source>
        <dbReference type="PDB" id="1UHK"/>
    </source>
</evidence>
<organism>
    <name type="scientific">Aequorea victoria</name>
    <name type="common">Water jellyfish</name>
    <name type="synonym">Mesonema victoria</name>
    <dbReference type="NCBI Taxonomy" id="6100"/>
    <lineage>
        <taxon>Eukaryota</taxon>
        <taxon>Metazoa</taxon>
        <taxon>Cnidaria</taxon>
        <taxon>Hydrozoa</taxon>
        <taxon>Hydroidolina</taxon>
        <taxon>Leptothecata</taxon>
        <taxon>Aequoreidae</taxon>
        <taxon>Aequorea</taxon>
    </lineage>
</organism>
<accession>P02592</accession>
<keyword id="KW-0002">3D-structure</keyword>
<keyword id="KW-0106">Calcium</keyword>
<keyword id="KW-0903">Direct protein sequencing</keyword>
<keyword id="KW-1015">Disulfide bond</keyword>
<keyword id="KW-0455">Luminescence</keyword>
<keyword id="KW-0479">Metal-binding</keyword>
<keyword id="KW-0599">Photoprotein</keyword>
<keyword id="KW-0677">Repeat</keyword>
<dbReference type="EMBL" id="L29571">
    <property type="protein sequence ID" value="AAA27720.1"/>
    <property type="molecule type" value="mRNA"/>
</dbReference>
<dbReference type="EMBL" id="M16104">
    <property type="protein sequence ID" value="AAA27717.1"/>
    <property type="molecule type" value="mRNA"/>
</dbReference>
<dbReference type="EMBL" id="M16105">
    <property type="protein sequence ID" value="AAA27718.1"/>
    <property type="molecule type" value="mRNA"/>
</dbReference>
<dbReference type="EMBL" id="M11394">
    <property type="protein sequence ID" value="AAA27719.1"/>
    <property type="molecule type" value="mRNA"/>
</dbReference>
<dbReference type="PIR" id="A03020">
    <property type="entry name" value="AQJFNV"/>
</dbReference>
<dbReference type="PDB" id="1EJ3">
    <property type="method" value="X-ray"/>
    <property type="resolution" value="2.30 A"/>
    <property type="chains" value="A/B=9-196"/>
</dbReference>
<dbReference type="PDB" id="1UHH">
    <property type="method" value="X-ray"/>
    <property type="resolution" value="1.80 A"/>
    <property type="chains" value="A/B=9-196"/>
</dbReference>
<dbReference type="PDB" id="1UHI">
    <property type="method" value="X-ray"/>
    <property type="resolution" value="1.80 A"/>
    <property type="chains" value="A/B=9-196"/>
</dbReference>
<dbReference type="PDB" id="1UHJ">
    <property type="method" value="X-ray"/>
    <property type="resolution" value="1.80 A"/>
    <property type="chains" value="A/B=9-196"/>
</dbReference>
<dbReference type="PDB" id="1UHK">
    <property type="method" value="X-ray"/>
    <property type="resolution" value="1.60 A"/>
    <property type="chains" value="A/B=9-196"/>
</dbReference>
<dbReference type="PDB" id="5ZAB">
    <property type="method" value="X-ray"/>
    <property type="resolution" value="2.15 A"/>
    <property type="chains" value="A/B/C/D/E/F/G/H/I/J/K/L/M/N/O/P=9-196"/>
</dbReference>
<dbReference type="PDB" id="7EG2">
    <property type="method" value="X-ray"/>
    <property type="resolution" value="2.22 A"/>
    <property type="chains" value="A/B/C/D/E/F/G/H/I/J/K/L/M/N/O/P=9-196"/>
</dbReference>
<dbReference type="PDB" id="7EG3">
    <property type="method" value="X-ray"/>
    <property type="resolution" value="2.09 A"/>
    <property type="chains" value="A/B/C/D/E/F/G/H/I/J/K/L/M/N/O/P=9-196"/>
</dbReference>
<dbReference type="PDBsum" id="1EJ3"/>
<dbReference type="PDBsum" id="1UHH"/>
<dbReference type="PDBsum" id="1UHI"/>
<dbReference type="PDBsum" id="1UHJ"/>
<dbReference type="PDBsum" id="1UHK"/>
<dbReference type="PDBsum" id="5ZAB"/>
<dbReference type="PDBsum" id="7EG2"/>
<dbReference type="PDBsum" id="7EG3"/>
<dbReference type="BMRB" id="P02592"/>
<dbReference type="SMR" id="P02592"/>
<dbReference type="KEGG" id="ag:AAA27720"/>
<dbReference type="BRENDA" id="1.13.12.24">
    <property type="organism ID" value="8923"/>
</dbReference>
<dbReference type="EvolutionaryTrace" id="P02592"/>
<dbReference type="GO" id="GO:0005509">
    <property type="term" value="F:calcium ion binding"/>
    <property type="evidence" value="ECO:0007669"/>
    <property type="project" value="InterPro"/>
</dbReference>
<dbReference type="GO" id="GO:0008218">
    <property type="term" value="P:bioluminescence"/>
    <property type="evidence" value="ECO:0007669"/>
    <property type="project" value="UniProtKB-KW"/>
</dbReference>
<dbReference type="CDD" id="cd00051">
    <property type="entry name" value="EFh"/>
    <property type="match status" value="1"/>
</dbReference>
<dbReference type="Gene3D" id="1.10.238.10">
    <property type="entry name" value="EF-hand"/>
    <property type="match status" value="1"/>
</dbReference>
<dbReference type="InterPro" id="IPR011992">
    <property type="entry name" value="EF-hand-dom_pair"/>
</dbReference>
<dbReference type="InterPro" id="IPR018247">
    <property type="entry name" value="EF_Hand_1_Ca_BS"/>
</dbReference>
<dbReference type="InterPro" id="IPR002048">
    <property type="entry name" value="EF_hand_dom"/>
</dbReference>
<dbReference type="Pfam" id="PF13202">
    <property type="entry name" value="EF-hand_5"/>
    <property type="match status" value="1"/>
</dbReference>
<dbReference type="Pfam" id="PF13499">
    <property type="entry name" value="EF-hand_7"/>
    <property type="match status" value="1"/>
</dbReference>
<dbReference type="SMART" id="SM00054">
    <property type="entry name" value="EFh"/>
    <property type="match status" value="3"/>
</dbReference>
<dbReference type="SUPFAM" id="SSF47473">
    <property type="entry name" value="EF-hand"/>
    <property type="match status" value="1"/>
</dbReference>
<dbReference type="PROSITE" id="PS00018">
    <property type="entry name" value="EF_HAND_1"/>
    <property type="match status" value="3"/>
</dbReference>
<dbReference type="PROSITE" id="PS50222">
    <property type="entry name" value="EF_HAND_2"/>
    <property type="match status" value="3"/>
</dbReference>